<gene>
    <name type="primary">Mtnd6</name>
    <name type="synonym">mt-Nd6</name>
    <name type="synonym">Nd6</name>
</gene>
<geneLocation type="mitochondrion"/>
<accession>P03925</accession>
<protein>
    <recommendedName>
        <fullName>NADH-ubiquinone oxidoreductase chain 6</fullName>
        <ecNumber evidence="3">7.1.1.2</ecNumber>
    </recommendedName>
    <alternativeName>
        <fullName>NADH dehydrogenase subunit 6</fullName>
    </alternativeName>
</protein>
<evidence type="ECO:0000255" key="1"/>
<evidence type="ECO:0000269" key="2">
    <source>
    </source>
</evidence>
<evidence type="ECO:0000269" key="3">
    <source>
    </source>
</evidence>
<evidence type="ECO:0000305" key="4"/>
<evidence type="ECO:0007744" key="5">
    <source>
        <dbReference type="PDB" id="8PW5"/>
    </source>
</evidence>
<evidence type="ECO:0007829" key="6">
    <source>
        <dbReference type="PDB" id="8OM1"/>
    </source>
</evidence>
<evidence type="ECO:0007829" key="7">
    <source>
        <dbReference type="PDB" id="8RGR"/>
    </source>
</evidence>
<dbReference type="EC" id="7.1.1.2" evidence="3"/>
<dbReference type="EMBL" id="J01420">
    <property type="protein sequence ID" value="AAB48655.1"/>
    <property type="molecule type" value="Genomic_DNA"/>
</dbReference>
<dbReference type="EMBL" id="V00711">
    <property type="protein sequence ID" value="CAA24089.1"/>
    <property type="molecule type" value="Genomic_DNA"/>
</dbReference>
<dbReference type="EMBL" id="AY172335">
    <property type="protein sequence ID" value="AAN85133.1"/>
    <property type="molecule type" value="Genomic_DNA"/>
</dbReference>
<dbReference type="PIR" id="A00457">
    <property type="entry name" value="DEMSN6"/>
</dbReference>
<dbReference type="RefSeq" id="NP_904339.1">
    <property type="nucleotide sequence ID" value="NC_005089.1"/>
</dbReference>
<dbReference type="PDB" id="6G2J">
    <property type="method" value="EM"/>
    <property type="resolution" value="3.30 A"/>
    <property type="chains" value="J=1-172"/>
</dbReference>
<dbReference type="PDB" id="6G72">
    <property type="method" value="EM"/>
    <property type="resolution" value="3.90 A"/>
    <property type="chains" value="J=1-172"/>
</dbReference>
<dbReference type="PDB" id="6ZR2">
    <property type="method" value="EM"/>
    <property type="resolution" value="3.10 A"/>
    <property type="chains" value="J=1-172"/>
</dbReference>
<dbReference type="PDB" id="6ZTQ">
    <property type="method" value="EM"/>
    <property type="resolution" value="3.00 A"/>
    <property type="chains" value="J=1-172"/>
</dbReference>
<dbReference type="PDB" id="7AK5">
    <property type="method" value="EM"/>
    <property type="resolution" value="3.17 A"/>
    <property type="chains" value="J=1-172"/>
</dbReference>
<dbReference type="PDB" id="7AK6">
    <property type="method" value="EM"/>
    <property type="resolution" value="3.82 A"/>
    <property type="chains" value="J=1-172"/>
</dbReference>
<dbReference type="PDB" id="7B93">
    <property type="method" value="EM"/>
    <property type="resolution" value="3.04 A"/>
    <property type="chains" value="J=1-172"/>
</dbReference>
<dbReference type="PDB" id="7PSA">
    <property type="method" value="EM"/>
    <property type="resolution" value="3.40 A"/>
    <property type="chains" value="J=1-172"/>
</dbReference>
<dbReference type="PDB" id="8C2S">
    <property type="method" value="EM"/>
    <property type="resolution" value="3.90 A"/>
    <property type="chains" value="J=1-171"/>
</dbReference>
<dbReference type="PDB" id="8CA3">
    <property type="method" value="EM"/>
    <property type="resolution" value="3.20 A"/>
    <property type="chains" value="J=1-172"/>
</dbReference>
<dbReference type="PDB" id="8CA5">
    <property type="method" value="EM"/>
    <property type="resolution" value="3.90 A"/>
    <property type="chains" value="J=1-172"/>
</dbReference>
<dbReference type="PDB" id="8IAO">
    <property type="method" value="EM"/>
    <property type="resolution" value="4.20 A"/>
    <property type="chains" value="J=1-172"/>
</dbReference>
<dbReference type="PDB" id="8IAQ">
    <property type="method" value="EM"/>
    <property type="resolution" value="3.40 A"/>
    <property type="chains" value="J=1-172"/>
</dbReference>
<dbReference type="PDB" id="8IB4">
    <property type="method" value="EM"/>
    <property type="resolution" value="4.30 A"/>
    <property type="chains" value="J=1-172"/>
</dbReference>
<dbReference type="PDB" id="8IB6">
    <property type="method" value="EM"/>
    <property type="resolution" value="3.30 A"/>
    <property type="chains" value="J=1-172"/>
</dbReference>
<dbReference type="PDB" id="8IB9">
    <property type="method" value="EM"/>
    <property type="resolution" value="4.30 A"/>
    <property type="chains" value="J=1-172"/>
</dbReference>
<dbReference type="PDB" id="8IBB">
    <property type="method" value="EM"/>
    <property type="resolution" value="3.30 A"/>
    <property type="chains" value="J=1-172"/>
</dbReference>
<dbReference type="PDB" id="8IBD">
    <property type="method" value="EM"/>
    <property type="resolution" value="4.20 A"/>
    <property type="chains" value="J=1-172"/>
</dbReference>
<dbReference type="PDB" id="8IBF">
    <property type="method" value="EM"/>
    <property type="resolution" value="3.30 A"/>
    <property type="chains" value="J=1-172"/>
</dbReference>
<dbReference type="PDB" id="8IC2">
    <property type="method" value="EM"/>
    <property type="resolution" value="6.30 A"/>
    <property type="chains" value="J=1-172"/>
</dbReference>
<dbReference type="PDB" id="8IC4">
    <property type="method" value="EM"/>
    <property type="resolution" value="3.20 A"/>
    <property type="chains" value="J=1-172"/>
</dbReference>
<dbReference type="PDB" id="8OLT">
    <property type="method" value="EM"/>
    <property type="resolution" value="2.84 A"/>
    <property type="chains" value="J=1-172"/>
</dbReference>
<dbReference type="PDB" id="8OM1">
    <property type="method" value="EM"/>
    <property type="resolution" value="2.39 A"/>
    <property type="chains" value="J=1-172"/>
</dbReference>
<dbReference type="PDB" id="8PW5">
    <property type="method" value="EM"/>
    <property type="resolution" value="3.60 A"/>
    <property type="chains" value="J1=1-172"/>
</dbReference>
<dbReference type="PDB" id="8PW6">
    <property type="method" value="EM"/>
    <property type="resolution" value="3.30 A"/>
    <property type="chains" value="J1=1-172"/>
</dbReference>
<dbReference type="PDB" id="8PW7">
    <property type="method" value="EM"/>
    <property type="resolution" value="3.50 A"/>
    <property type="chains" value="J1=1-172"/>
</dbReference>
<dbReference type="PDB" id="8RGP">
    <property type="method" value="EM"/>
    <property type="resolution" value="3.00 A"/>
    <property type="chains" value="J=1-172"/>
</dbReference>
<dbReference type="PDB" id="8RGQ">
    <property type="method" value="EM"/>
    <property type="resolution" value="3.00 A"/>
    <property type="chains" value="J=1-172"/>
</dbReference>
<dbReference type="PDB" id="8RGR">
    <property type="method" value="EM"/>
    <property type="resolution" value="2.90 A"/>
    <property type="chains" value="J=1-172"/>
</dbReference>
<dbReference type="PDB" id="8RGT">
    <property type="method" value="EM"/>
    <property type="resolution" value="3.10 A"/>
    <property type="chains" value="J=1-172"/>
</dbReference>
<dbReference type="PDB" id="8UCA">
    <property type="method" value="EM"/>
    <property type="resolution" value="3.70 A"/>
    <property type="chains" value="6/6a=1-172"/>
</dbReference>
<dbReference type="PDBsum" id="6G2J"/>
<dbReference type="PDBsum" id="6G72"/>
<dbReference type="PDBsum" id="6ZR2"/>
<dbReference type="PDBsum" id="6ZTQ"/>
<dbReference type="PDBsum" id="7AK5"/>
<dbReference type="PDBsum" id="7AK6"/>
<dbReference type="PDBsum" id="7B93"/>
<dbReference type="PDBsum" id="7PSA"/>
<dbReference type="PDBsum" id="8C2S"/>
<dbReference type="PDBsum" id="8CA3"/>
<dbReference type="PDBsum" id="8CA5"/>
<dbReference type="PDBsum" id="8IAO"/>
<dbReference type="PDBsum" id="8IAQ"/>
<dbReference type="PDBsum" id="8IB4"/>
<dbReference type="PDBsum" id="8IB6"/>
<dbReference type="PDBsum" id="8IB9"/>
<dbReference type="PDBsum" id="8IBB"/>
<dbReference type="PDBsum" id="8IBD"/>
<dbReference type="PDBsum" id="8IBF"/>
<dbReference type="PDBsum" id="8IC2"/>
<dbReference type="PDBsum" id="8IC4"/>
<dbReference type="PDBsum" id="8OLT"/>
<dbReference type="PDBsum" id="8OM1"/>
<dbReference type="PDBsum" id="8PW5"/>
<dbReference type="PDBsum" id="8PW6"/>
<dbReference type="PDBsum" id="8PW7"/>
<dbReference type="PDBsum" id="8RGP"/>
<dbReference type="PDBsum" id="8RGQ"/>
<dbReference type="PDBsum" id="8RGR"/>
<dbReference type="PDBsum" id="8RGT"/>
<dbReference type="PDBsum" id="8UCA"/>
<dbReference type="EMDB" id="EMD-11377"/>
<dbReference type="EMDB" id="EMD-11424"/>
<dbReference type="EMDB" id="EMD-11810"/>
<dbReference type="EMDB" id="EMD-11811"/>
<dbReference type="EMDB" id="EMD-12095"/>
<dbReference type="EMDB" id="EMD-13611"/>
<dbReference type="EMDB" id="EMD-16398"/>
<dbReference type="EMDB" id="EMD-16516"/>
<dbReference type="EMDB" id="EMD-16518"/>
<dbReference type="EMDB" id="EMD-16962"/>
<dbReference type="EMDB" id="EMD-16965"/>
<dbReference type="EMDB" id="EMD-17989"/>
<dbReference type="EMDB" id="EMD-17990"/>
<dbReference type="EMDB" id="EMD-17991"/>
<dbReference type="EMDB" id="EMD-19145"/>
<dbReference type="EMDB" id="EMD-19146"/>
<dbReference type="EMDB" id="EMD-19147"/>
<dbReference type="EMDB" id="EMD-19148"/>
<dbReference type="EMDB" id="EMD-35313"/>
<dbReference type="EMDB" id="EMD-35315"/>
<dbReference type="EMDB" id="EMD-35331"/>
<dbReference type="EMDB" id="EMD-35333"/>
<dbReference type="EMDB" id="EMD-35336"/>
<dbReference type="EMDB" id="EMD-35338"/>
<dbReference type="EMDB" id="EMD-35340"/>
<dbReference type="EMDB" id="EMD-35342"/>
<dbReference type="EMDB" id="EMD-35352"/>
<dbReference type="EMDB" id="EMD-35354"/>
<dbReference type="EMDB" id="EMD-42122"/>
<dbReference type="EMDB" id="EMD-4345"/>
<dbReference type="EMDB" id="EMD-4356"/>
<dbReference type="SMR" id="P03925"/>
<dbReference type="BioGRID" id="201553">
    <property type="interactions" value="1"/>
</dbReference>
<dbReference type="ComplexPortal" id="CPX-266">
    <property type="entry name" value="Mitochondrial respiratory chain complex I"/>
</dbReference>
<dbReference type="FunCoup" id="P03925">
    <property type="interactions" value="225"/>
</dbReference>
<dbReference type="IntAct" id="P03925">
    <property type="interactions" value="1"/>
</dbReference>
<dbReference type="STRING" id="10090.ENSMUSP00000081002"/>
<dbReference type="PaxDb" id="10090-ENSMUSP00000081002"/>
<dbReference type="Antibodypedia" id="35364">
    <property type="antibodies" value="87 antibodies from 21 providers"/>
</dbReference>
<dbReference type="Ensembl" id="ENSMUST00000082419.1">
    <property type="protein sequence ID" value="ENSMUSP00000081002.1"/>
    <property type="gene ID" value="ENSMUSG00000064368.1"/>
</dbReference>
<dbReference type="GeneID" id="17722"/>
<dbReference type="KEGG" id="mmu:17722"/>
<dbReference type="AGR" id="MGI:102495"/>
<dbReference type="CTD" id="4541"/>
<dbReference type="MGI" id="MGI:102495">
    <property type="gene designation" value="mt-Nd6"/>
</dbReference>
<dbReference type="VEuPathDB" id="HostDB:ENSMUSG00000064368"/>
<dbReference type="eggNOG" id="ENOG502S2Q2">
    <property type="taxonomic scope" value="Eukaryota"/>
</dbReference>
<dbReference type="GeneTree" id="ENSGT00390000003988"/>
<dbReference type="HOGENOM" id="CLU_129718_0_0_1"/>
<dbReference type="InParanoid" id="P03925"/>
<dbReference type="OMA" id="WVIYDTG"/>
<dbReference type="OrthoDB" id="9837654at2759"/>
<dbReference type="PhylomeDB" id="P03925"/>
<dbReference type="TreeFam" id="TF343324"/>
<dbReference type="Reactome" id="R-MMU-611105">
    <property type="pathway name" value="Respiratory electron transport"/>
</dbReference>
<dbReference type="Reactome" id="R-MMU-6799198">
    <property type="pathway name" value="Complex I biogenesis"/>
</dbReference>
<dbReference type="ChiTaRS" id="mt-Nd6">
    <property type="organism name" value="mouse"/>
</dbReference>
<dbReference type="PRO" id="PR:P03925"/>
<dbReference type="Proteomes" id="UP000000589">
    <property type="component" value="Mitochondrion MT"/>
</dbReference>
<dbReference type="RNAct" id="P03925">
    <property type="molecule type" value="protein"/>
</dbReference>
<dbReference type="Bgee" id="ENSMUSG00000064368">
    <property type="expression patterns" value="Expressed in retinal neural layer and 63 other cell types or tissues"/>
</dbReference>
<dbReference type="ExpressionAtlas" id="P03925">
    <property type="expression patterns" value="baseline and differential"/>
</dbReference>
<dbReference type="GO" id="GO:0005743">
    <property type="term" value="C:mitochondrial inner membrane"/>
    <property type="evidence" value="ECO:0000314"/>
    <property type="project" value="UniProtKB"/>
</dbReference>
<dbReference type="GO" id="GO:0005739">
    <property type="term" value="C:mitochondrion"/>
    <property type="evidence" value="ECO:0007005"/>
    <property type="project" value="MGI"/>
</dbReference>
<dbReference type="GO" id="GO:0045271">
    <property type="term" value="C:respiratory chain complex I"/>
    <property type="evidence" value="ECO:0000314"/>
    <property type="project" value="UniProtKB"/>
</dbReference>
<dbReference type="GO" id="GO:0008137">
    <property type="term" value="F:NADH dehydrogenase (ubiquinone) activity"/>
    <property type="evidence" value="ECO:0000315"/>
    <property type="project" value="UniProtKB"/>
</dbReference>
<dbReference type="GO" id="GO:0009060">
    <property type="term" value="P:aerobic respiration"/>
    <property type="evidence" value="ECO:0000303"/>
    <property type="project" value="ComplexPortal"/>
</dbReference>
<dbReference type="GO" id="GO:0006120">
    <property type="term" value="P:mitochondrial electron transport, NADH to ubiquinone"/>
    <property type="evidence" value="ECO:0000315"/>
    <property type="project" value="UniProtKB"/>
</dbReference>
<dbReference type="GO" id="GO:0032981">
    <property type="term" value="P:mitochondrial respiratory chain complex I assembly"/>
    <property type="evidence" value="ECO:0000315"/>
    <property type="project" value="UniProtKB"/>
</dbReference>
<dbReference type="GO" id="GO:0042776">
    <property type="term" value="P:proton motive force-driven mitochondrial ATP synthesis"/>
    <property type="evidence" value="ECO:0000303"/>
    <property type="project" value="ComplexPortal"/>
</dbReference>
<dbReference type="GO" id="GO:0042220">
    <property type="term" value="P:response to cocaine"/>
    <property type="evidence" value="ECO:0007669"/>
    <property type="project" value="Ensembl"/>
</dbReference>
<dbReference type="GO" id="GO:0042542">
    <property type="term" value="P:response to hydrogen peroxide"/>
    <property type="evidence" value="ECO:0007669"/>
    <property type="project" value="Ensembl"/>
</dbReference>
<dbReference type="GO" id="GO:0035094">
    <property type="term" value="P:response to nicotine"/>
    <property type="evidence" value="ECO:0007669"/>
    <property type="project" value="Ensembl"/>
</dbReference>
<dbReference type="FunFam" id="1.20.120.1200:FF:000015">
    <property type="entry name" value="NADH-ubiquinone oxidoreductase chain 6"/>
    <property type="match status" value="1"/>
</dbReference>
<dbReference type="Gene3D" id="1.20.120.1200">
    <property type="entry name" value="NADH-ubiquinone/plastoquinone oxidoreductase chain 6, subunit NuoJ"/>
    <property type="match status" value="1"/>
</dbReference>
<dbReference type="InterPro" id="IPR050269">
    <property type="entry name" value="ComplexI_Subunit6"/>
</dbReference>
<dbReference type="InterPro" id="IPR001457">
    <property type="entry name" value="NADH_UbQ/plastoQ_OxRdtase_su6"/>
</dbReference>
<dbReference type="InterPro" id="IPR042106">
    <property type="entry name" value="Nuo/plastoQ_OxRdtase_6_NuoJ"/>
</dbReference>
<dbReference type="PANTHER" id="PTHR11435">
    <property type="entry name" value="NADH UBIQUINONE OXIDOREDUCTASE SUBUNIT ND6"/>
    <property type="match status" value="1"/>
</dbReference>
<dbReference type="PANTHER" id="PTHR11435:SF1">
    <property type="entry name" value="NADH-UBIQUINONE OXIDOREDUCTASE CHAIN 6"/>
    <property type="match status" value="1"/>
</dbReference>
<dbReference type="Pfam" id="PF00499">
    <property type="entry name" value="Oxidored_q3"/>
    <property type="match status" value="1"/>
</dbReference>
<proteinExistence type="evidence at protein level"/>
<organism>
    <name type="scientific">Mus musculus</name>
    <name type="common">Mouse</name>
    <dbReference type="NCBI Taxonomy" id="10090"/>
    <lineage>
        <taxon>Eukaryota</taxon>
        <taxon>Metazoa</taxon>
        <taxon>Chordata</taxon>
        <taxon>Craniata</taxon>
        <taxon>Vertebrata</taxon>
        <taxon>Euteleostomi</taxon>
        <taxon>Mammalia</taxon>
        <taxon>Eutheria</taxon>
        <taxon>Euarchontoglires</taxon>
        <taxon>Glires</taxon>
        <taxon>Rodentia</taxon>
        <taxon>Myomorpha</taxon>
        <taxon>Muroidea</taxon>
        <taxon>Muridae</taxon>
        <taxon>Murinae</taxon>
        <taxon>Mus</taxon>
        <taxon>Mus</taxon>
    </lineage>
</organism>
<feature type="chain" id="PRO_0000118304" description="NADH-ubiquinone oxidoreductase chain 6">
    <location>
        <begin position="1"/>
        <end position="172"/>
    </location>
</feature>
<feature type="transmembrane region" description="Helical" evidence="1">
    <location>
        <begin position="1"/>
        <end position="21"/>
    </location>
</feature>
<feature type="transmembrane region" description="Helical" evidence="1">
    <location>
        <begin position="38"/>
        <end position="58"/>
    </location>
</feature>
<feature type="transmembrane region" description="Helical" evidence="1">
    <location>
        <begin position="86"/>
        <end position="106"/>
    </location>
</feature>
<feature type="transmembrane region" description="Helical" evidence="1">
    <location>
        <begin position="147"/>
        <end position="167"/>
    </location>
</feature>
<feature type="helix" evidence="6">
    <location>
        <begin position="4"/>
        <end position="21"/>
    </location>
</feature>
<feature type="helix" evidence="6">
    <location>
        <begin position="25"/>
        <end position="45"/>
    </location>
</feature>
<feature type="helix" evidence="6">
    <location>
        <begin position="50"/>
        <end position="73"/>
    </location>
</feature>
<feature type="turn" evidence="6">
    <location>
        <begin position="82"/>
        <end position="84"/>
    </location>
</feature>
<feature type="helix" evidence="6">
    <location>
        <begin position="86"/>
        <end position="109"/>
    </location>
</feature>
<feature type="strand" evidence="6">
    <location>
        <begin position="111"/>
        <end position="114"/>
    </location>
</feature>
<feature type="strand" evidence="7">
    <location>
        <begin position="117"/>
        <end position="119"/>
    </location>
</feature>
<feature type="strand" evidence="6">
    <location>
        <begin position="122"/>
        <end position="124"/>
    </location>
</feature>
<feature type="helix" evidence="6">
    <location>
        <begin position="137"/>
        <end position="142"/>
    </location>
</feature>
<feature type="turn" evidence="6">
    <location>
        <begin position="143"/>
        <end position="147"/>
    </location>
</feature>
<feature type="helix" evidence="6">
    <location>
        <begin position="149"/>
        <end position="170"/>
    </location>
</feature>
<keyword id="KW-0002">3D-structure</keyword>
<keyword id="KW-0249">Electron transport</keyword>
<keyword id="KW-0472">Membrane</keyword>
<keyword id="KW-0496">Mitochondrion</keyword>
<keyword id="KW-0999">Mitochondrion inner membrane</keyword>
<keyword id="KW-0520">NAD</keyword>
<keyword id="KW-1185">Reference proteome</keyword>
<keyword id="KW-0679">Respiratory chain</keyword>
<keyword id="KW-1278">Translocase</keyword>
<keyword id="KW-0812">Transmembrane</keyword>
<keyword id="KW-1133">Transmembrane helix</keyword>
<keyword id="KW-0813">Transport</keyword>
<keyword id="KW-0830">Ubiquinone</keyword>
<reference key="1">
    <citation type="journal article" date="1981" name="Cell">
        <title>Sequence and gene organization of mouse mitochondrial DNA.</title>
        <authorList>
            <person name="Bibb M.J."/>
            <person name="van Etten R.A."/>
            <person name="Wright C.T."/>
            <person name="Walberg M.W."/>
            <person name="Clayton D.A."/>
        </authorList>
    </citation>
    <scope>NUCLEOTIDE SEQUENCE [GENOMIC DNA]</scope>
</reference>
<reference key="2">
    <citation type="journal article" date="2003" name="Nucleic Acids Res.">
        <title>Revisiting the mouse mitochondrial DNA sequence.</title>
        <authorList>
            <person name="Bayona-Bafaluy M.P."/>
            <person name="Acin-Perez R."/>
            <person name="Mullikin J.C."/>
            <person name="Park J.S."/>
            <person name="Moreno-Loshuertos R."/>
            <person name="Hu P."/>
            <person name="Perez-Martos A."/>
            <person name="Fernandez-Silva P."/>
            <person name="Bai Y."/>
            <person name="Enriquez J.A."/>
        </authorList>
    </citation>
    <scope>NUCLEOTIDE SEQUENCE [LARGE SCALE GENOMIC DNA]</scope>
    <source>
        <strain>C57BL/6J</strain>
    </source>
</reference>
<reference key="3">
    <citation type="journal article" date="1998" name="EMBO J.">
        <title>The mtDNA-encoded ND6 subunit of mitochondrial NADH dehydrogenase is essential for the assembly of the membrane arm and the respiratory function of the enzyme.</title>
        <authorList>
            <person name="Bai Y."/>
            <person name="Attardi G."/>
        </authorList>
    </citation>
    <scope>FUNCTION</scope>
    <scope>CATALYTIC ACTIVITY</scope>
</reference>
<reference evidence="5" key="4">
    <citation type="journal article" date="2024" name="Nat. Struct. Mol. Biol.">
        <title>SCAF1 drives the compositional diversity of mammalian respirasomes.</title>
        <authorList>
            <person name="Vercellino I."/>
            <person name="Sazanov L.A."/>
        </authorList>
    </citation>
    <scope>STRUCTURE BY ELECTRON MICROSCOPY (3.60 ANGSTROMS) IN COMPLEX WITH MITOCHONDRIAL RESPIRATORY SUPERCOMPLEX</scope>
    <scope>FUNCTION</scope>
    <scope>SUBCELLULAR LOCATION</scope>
    <scope>SUBUNIT</scope>
</reference>
<name>NU6M_MOUSE</name>
<comment type="function">
    <text evidence="2 3">Core subunit of the mitochondrial membrane respiratory chain NADH dehydrogenase (Complex I) which catalyzes electron transfer from NADH through the respiratory chain, using ubiquinone as an electron acceptor (PubMed:9707444, PubMed:38575788). Essential for the catalytic activity and assembly of complex I (PubMed:9707444, PubMed:38575788).</text>
</comment>
<comment type="catalytic activity">
    <reaction evidence="3">
        <text>a ubiquinone + NADH + 5 H(+)(in) = a ubiquinol + NAD(+) + 4 H(+)(out)</text>
        <dbReference type="Rhea" id="RHEA:29091"/>
        <dbReference type="Rhea" id="RHEA-COMP:9565"/>
        <dbReference type="Rhea" id="RHEA-COMP:9566"/>
        <dbReference type="ChEBI" id="CHEBI:15378"/>
        <dbReference type="ChEBI" id="CHEBI:16389"/>
        <dbReference type="ChEBI" id="CHEBI:17976"/>
        <dbReference type="ChEBI" id="CHEBI:57540"/>
        <dbReference type="ChEBI" id="CHEBI:57945"/>
        <dbReference type="EC" id="7.1.1.2"/>
    </reaction>
</comment>
<comment type="subunit">
    <text evidence="2">Core subunit of respiratory chain NADH dehydrogenase (Complex I) which is composed of 45 different subunits.</text>
</comment>
<comment type="subcellular location">
    <subcellularLocation>
        <location evidence="2">Mitochondrion inner membrane</location>
        <topology evidence="1">Multi-pass membrane protein</topology>
    </subcellularLocation>
</comment>
<comment type="similarity">
    <text evidence="4">Belongs to the complex I subunit 6 family.</text>
</comment>
<sequence>MNNYIFVLSSLFLVGCLGLALKPSPIYGGLGLIVSGFVGCLMVLGFGGSFLGLMVFLIYLGGMLVVFGYTTAMATEEYPETWGSNWLILGFLVLGVIMEVFLICVLNYYDEVGVINLDGLGDWLMYEVDDVGVMLEGGIGVAAMYSCATWMMVVAGWSLFAGIFIIIEITRD</sequence>